<evidence type="ECO:0000255" key="1">
    <source>
        <dbReference type="HAMAP-Rule" id="MF_00558"/>
    </source>
</evidence>
<organism>
    <name type="scientific">Aliivibrio fischeri (strain ATCC 700601 / ES114)</name>
    <name type="common">Vibrio fischeri</name>
    <dbReference type="NCBI Taxonomy" id="312309"/>
    <lineage>
        <taxon>Bacteria</taxon>
        <taxon>Pseudomonadati</taxon>
        <taxon>Pseudomonadota</taxon>
        <taxon>Gammaproteobacteria</taxon>
        <taxon>Vibrionales</taxon>
        <taxon>Vibrionaceae</taxon>
        <taxon>Aliivibrio</taxon>
    </lineage>
</organism>
<keyword id="KW-0067">ATP-binding</keyword>
<keyword id="KW-0436">Ligase</keyword>
<keyword id="KW-0460">Magnesium</keyword>
<keyword id="KW-0479">Metal-binding</keyword>
<keyword id="KW-0547">Nucleotide-binding</keyword>
<keyword id="KW-1185">Reference proteome</keyword>
<keyword id="KW-0816">Tricarboxylic acid cycle</keyword>
<feature type="chain" id="PRO_1000129235" description="Succinate--CoA ligase [ADP-forming] subunit beta">
    <location>
        <begin position="1"/>
        <end position="388"/>
    </location>
</feature>
<feature type="domain" description="ATP-grasp" evidence="1">
    <location>
        <begin position="9"/>
        <end position="244"/>
    </location>
</feature>
<feature type="binding site" evidence="1">
    <location>
        <position position="46"/>
    </location>
    <ligand>
        <name>ATP</name>
        <dbReference type="ChEBI" id="CHEBI:30616"/>
    </ligand>
</feature>
<feature type="binding site" evidence="1">
    <location>
        <begin position="53"/>
        <end position="55"/>
    </location>
    <ligand>
        <name>ATP</name>
        <dbReference type="ChEBI" id="CHEBI:30616"/>
    </ligand>
</feature>
<feature type="binding site" evidence="1">
    <location>
        <position position="99"/>
    </location>
    <ligand>
        <name>ATP</name>
        <dbReference type="ChEBI" id="CHEBI:30616"/>
    </ligand>
</feature>
<feature type="binding site" evidence="1">
    <location>
        <position position="102"/>
    </location>
    <ligand>
        <name>ATP</name>
        <dbReference type="ChEBI" id="CHEBI:30616"/>
    </ligand>
</feature>
<feature type="binding site" evidence="1">
    <location>
        <position position="107"/>
    </location>
    <ligand>
        <name>ATP</name>
        <dbReference type="ChEBI" id="CHEBI:30616"/>
    </ligand>
</feature>
<feature type="binding site" evidence="1">
    <location>
        <position position="199"/>
    </location>
    <ligand>
        <name>Mg(2+)</name>
        <dbReference type="ChEBI" id="CHEBI:18420"/>
    </ligand>
</feature>
<feature type="binding site" evidence="1">
    <location>
        <position position="213"/>
    </location>
    <ligand>
        <name>Mg(2+)</name>
        <dbReference type="ChEBI" id="CHEBI:18420"/>
    </ligand>
</feature>
<feature type="binding site" evidence="1">
    <location>
        <position position="264"/>
    </location>
    <ligand>
        <name>substrate</name>
        <note>ligand shared with subunit alpha</note>
    </ligand>
</feature>
<feature type="binding site" evidence="1">
    <location>
        <begin position="321"/>
        <end position="323"/>
    </location>
    <ligand>
        <name>substrate</name>
        <note>ligand shared with subunit alpha</note>
    </ligand>
</feature>
<protein>
    <recommendedName>
        <fullName evidence="1">Succinate--CoA ligase [ADP-forming] subunit beta</fullName>
        <ecNumber evidence="1">6.2.1.5</ecNumber>
    </recommendedName>
    <alternativeName>
        <fullName evidence="1">Succinyl-CoA synthetase subunit beta</fullName>
        <shortName evidence="1">SCS-beta</shortName>
    </alternativeName>
</protein>
<reference key="1">
    <citation type="journal article" date="2005" name="Proc. Natl. Acad. Sci. U.S.A.">
        <title>Complete genome sequence of Vibrio fischeri: a symbiotic bacterium with pathogenic congeners.</title>
        <authorList>
            <person name="Ruby E.G."/>
            <person name="Urbanowski M."/>
            <person name="Campbell J."/>
            <person name="Dunn A."/>
            <person name="Faini M."/>
            <person name="Gunsalus R."/>
            <person name="Lostroh P."/>
            <person name="Lupp C."/>
            <person name="McCann J."/>
            <person name="Millikan D."/>
            <person name="Schaefer A."/>
            <person name="Stabb E."/>
            <person name="Stevens A."/>
            <person name="Visick K."/>
            <person name="Whistler C."/>
            <person name="Greenberg E.P."/>
        </authorList>
    </citation>
    <scope>NUCLEOTIDE SEQUENCE [LARGE SCALE GENOMIC DNA]</scope>
    <source>
        <strain>ATCC 700601 / ES114</strain>
    </source>
</reference>
<proteinExistence type="inferred from homology"/>
<gene>
    <name evidence="1" type="primary">sucC</name>
    <name type="ordered locus">VF_0825</name>
</gene>
<comment type="function">
    <text evidence="1">Succinyl-CoA synthetase functions in the citric acid cycle (TCA), coupling the hydrolysis of succinyl-CoA to the synthesis of either ATP or GTP and thus represents the only step of substrate-level phosphorylation in the TCA. The beta subunit provides nucleotide specificity of the enzyme and binds the substrate succinate, while the binding sites for coenzyme A and phosphate are found in the alpha subunit.</text>
</comment>
<comment type="catalytic activity">
    <reaction evidence="1">
        <text>succinate + ATP + CoA = succinyl-CoA + ADP + phosphate</text>
        <dbReference type="Rhea" id="RHEA:17661"/>
        <dbReference type="ChEBI" id="CHEBI:30031"/>
        <dbReference type="ChEBI" id="CHEBI:30616"/>
        <dbReference type="ChEBI" id="CHEBI:43474"/>
        <dbReference type="ChEBI" id="CHEBI:57287"/>
        <dbReference type="ChEBI" id="CHEBI:57292"/>
        <dbReference type="ChEBI" id="CHEBI:456216"/>
        <dbReference type="EC" id="6.2.1.5"/>
    </reaction>
    <physiologicalReaction direction="right-to-left" evidence="1">
        <dbReference type="Rhea" id="RHEA:17663"/>
    </physiologicalReaction>
</comment>
<comment type="catalytic activity">
    <reaction evidence="1">
        <text>GTP + succinate + CoA = succinyl-CoA + GDP + phosphate</text>
        <dbReference type="Rhea" id="RHEA:22120"/>
        <dbReference type="ChEBI" id="CHEBI:30031"/>
        <dbReference type="ChEBI" id="CHEBI:37565"/>
        <dbReference type="ChEBI" id="CHEBI:43474"/>
        <dbReference type="ChEBI" id="CHEBI:57287"/>
        <dbReference type="ChEBI" id="CHEBI:57292"/>
        <dbReference type="ChEBI" id="CHEBI:58189"/>
    </reaction>
    <physiologicalReaction direction="right-to-left" evidence="1">
        <dbReference type="Rhea" id="RHEA:22122"/>
    </physiologicalReaction>
</comment>
<comment type="cofactor">
    <cofactor evidence="1">
        <name>Mg(2+)</name>
        <dbReference type="ChEBI" id="CHEBI:18420"/>
    </cofactor>
    <text evidence="1">Binds 1 Mg(2+) ion per subunit.</text>
</comment>
<comment type="pathway">
    <text evidence="1">Carbohydrate metabolism; tricarboxylic acid cycle; succinate from succinyl-CoA (ligase route): step 1/1.</text>
</comment>
<comment type="subunit">
    <text evidence="1">Heterotetramer of two alpha and two beta subunits.</text>
</comment>
<comment type="similarity">
    <text evidence="1">Belongs to the succinate/malate CoA ligase beta subunit family.</text>
</comment>
<name>SUCC_ALIF1</name>
<accession>Q5E6M6</accession>
<dbReference type="EC" id="6.2.1.5" evidence="1"/>
<dbReference type="EMBL" id="CP000020">
    <property type="protein sequence ID" value="AAW85320.1"/>
    <property type="molecule type" value="Genomic_DNA"/>
</dbReference>
<dbReference type="RefSeq" id="WP_005418307.1">
    <property type="nucleotide sequence ID" value="NZ_CAWLES010000001.1"/>
</dbReference>
<dbReference type="RefSeq" id="YP_204208.1">
    <property type="nucleotide sequence ID" value="NC_006840.2"/>
</dbReference>
<dbReference type="SMR" id="Q5E6M6"/>
<dbReference type="STRING" id="312309.VF_0825"/>
<dbReference type="EnsemblBacteria" id="AAW85320">
    <property type="protein sequence ID" value="AAW85320"/>
    <property type="gene ID" value="VF_0825"/>
</dbReference>
<dbReference type="GeneID" id="54163493"/>
<dbReference type="KEGG" id="vfi:VF_0825"/>
<dbReference type="PATRIC" id="fig|312309.11.peg.818"/>
<dbReference type="eggNOG" id="COG0045">
    <property type="taxonomic scope" value="Bacteria"/>
</dbReference>
<dbReference type="HOGENOM" id="CLU_037430_0_2_6"/>
<dbReference type="OrthoDB" id="9802602at2"/>
<dbReference type="UniPathway" id="UPA00223">
    <property type="reaction ID" value="UER00999"/>
</dbReference>
<dbReference type="Proteomes" id="UP000000537">
    <property type="component" value="Chromosome I"/>
</dbReference>
<dbReference type="GO" id="GO:0005829">
    <property type="term" value="C:cytosol"/>
    <property type="evidence" value="ECO:0007669"/>
    <property type="project" value="TreeGrafter"/>
</dbReference>
<dbReference type="GO" id="GO:0042709">
    <property type="term" value="C:succinate-CoA ligase complex"/>
    <property type="evidence" value="ECO:0007669"/>
    <property type="project" value="TreeGrafter"/>
</dbReference>
<dbReference type="GO" id="GO:0005524">
    <property type="term" value="F:ATP binding"/>
    <property type="evidence" value="ECO:0007669"/>
    <property type="project" value="UniProtKB-UniRule"/>
</dbReference>
<dbReference type="GO" id="GO:0000287">
    <property type="term" value="F:magnesium ion binding"/>
    <property type="evidence" value="ECO:0007669"/>
    <property type="project" value="UniProtKB-UniRule"/>
</dbReference>
<dbReference type="GO" id="GO:0004775">
    <property type="term" value="F:succinate-CoA ligase (ADP-forming) activity"/>
    <property type="evidence" value="ECO:0007669"/>
    <property type="project" value="UniProtKB-UniRule"/>
</dbReference>
<dbReference type="GO" id="GO:0004776">
    <property type="term" value="F:succinate-CoA ligase (GDP-forming) activity"/>
    <property type="evidence" value="ECO:0007669"/>
    <property type="project" value="RHEA"/>
</dbReference>
<dbReference type="GO" id="GO:0006104">
    <property type="term" value="P:succinyl-CoA metabolic process"/>
    <property type="evidence" value="ECO:0007669"/>
    <property type="project" value="TreeGrafter"/>
</dbReference>
<dbReference type="GO" id="GO:0006099">
    <property type="term" value="P:tricarboxylic acid cycle"/>
    <property type="evidence" value="ECO:0007669"/>
    <property type="project" value="UniProtKB-UniRule"/>
</dbReference>
<dbReference type="FunFam" id="3.30.1490.20:FF:000002">
    <property type="entry name" value="Succinate--CoA ligase [ADP-forming] subunit beta"/>
    <property type="match status" value="1"/>
</dbReference>
<dbReference type="FunFam" id="3.30.470.20:FF:000002">
    <property type="entry name" value="Succinate--CoA ligase [ADP-forming] subunit beta"/>
    <property type="match status" value="1"/>
</dbReference>
<dbReference type="FunFam" id="3.40.50.261:FF:000001">
    <property type="entry name" value="Succinate--CoA ligase [ADP-forming] subunit beta"/>
    <property type="match status" value="1"/>
</dbReference>
<dbReference type="Gene3D" id="3.30.1490.20">
    <property type="entry name" value="ATP-grasp fold, A domain"/>
    <property type="match status" value="1"/>
</dbReference>
<dbReference type="Gene3D" id="3.30.470.20">
    <property type="entry name" value="ATP-grasp fold, B domain"/>
    <property type="match status" value="1"/>
</dbReference>
<dbReference type="Gene3D" id="3.40.50.261">
    <property type="entry name" value="Succinyl-CoA synthetase domains"/>
    <property type="match status" value="1"/>
</dbReference>
<dbReference type="HAMAP" id="MF_00558">
    <property type="entry name" value="Succ_CoA_beta"/>
    <property type="match status" value="1"/>
</dbReference>
<dbReference type="InterPro" id="IPR011761">
    <property type="entry name" value="ATP-grasp"/>
</dbReference>
<dbReference type="InterPro" id="IPR013650">
    <property type="entry name" value="ATP-grasp_succ-CoA_synth-type"/>
</dbReference>
<dbReference type="InterPro" id="IPR013815">
    <property type="entry name" value="ATP_grasp_subdomain_1"/>
</dbReference>
<dbReference type="InterPro" id="IPR017866">
    <property type="entry name" value="Succ-CoA_synthase_bsu_CS"/>
</dbReference>
<dbReference type="InterPro" id="IPR005811">
    <property type="entry name" value="SUCC_ACL_C"/>
</dbReference>
<dbReference type="InterPro" id="IPR005809">
    <property type="entry name" value="Succ_CoA_ligase-like_bsu"/>
</dbReference>
<dbReference type="InterPro" id="IPR016102">
    <property type="entry name" value="Succinyl-CoA_synth-like"/>
</dbReference>
<dbReference type="NCBIfam" id="NF001913">
    <property type="entry name" value="PRK00696.1"/>
    <property type="match status" value="1"/>
</dbReference>
<dbReference type="NCBIfam" id="TIGR01016">
    <property type="entry name" value="sucCoAbeta"/>
    <property type="match status" value="1"/>
</dbReference>
<dbReference type="PANTHER" id="PTHR11815:SF10">
    <property type="entry name" value="SUCCINATE--COA LIGASE [GDP-FORMING] SUBUNIT BETA, MITOCHONDRIAL"/>
    <property type="match status" value="1"/>
</dbReference>
<dbReference type="PANTHER" id="PTHR11815">
    <property type="entry name" value="SUCCINYL-COA SYNTHETASE BETA CHAIN"/>
    <property type="match status" value="1"/>
</dbReference>
<dbReference type="Pfam" id="PF08442">
    <property type="entry name" value="ATP-grasp_2"/>
    <property type="match status" value="1"/>
</dbReference>
<dbReference type="Pfam" id="PF00549">
    <property type="entry name" value="Ligase_CoA"/>
    <property type="match status" value="1"/>
</dbReference>
<dbReference type="PIRSF" id="PIRSF001554">
    <property type="entry name" value="SucCS_beta"/>
    <property type="match status" value="1"/>
</dbReference>
<dbReference type="SUPFAM" id="SSF56059">
    <property type="entry name" value="Glutathione synthetase ATP-binding domain-like"/>
    <property type="match status" value="1"/>
</dbReference>
<dbReference type="SUPFAM" id="SSF52210">
    <property type="entry name" value="Succinyl-CoA synthetase domains"/>
    <property type="match status" value="1"/>
</dbReference>
<dbReference type="PROSITE" id="PS50975">
    <property type="entry name" value="ATP_GRASP"/>
    <property type="match status" value="1"/>
</dbReference>
<dbReference type="PROSITE" id="PS01217">
    <property type="entry name" value="SUCCINYL_COA_LIG_3"/>
    <property type="match status" value="1"/>
</dbReference>
<sequence length="388" mass="41383">MNLHEYQAKQLFAEFGLPVPEGYACDTPQEAFEAAGRISTAKKVVKCQVHAGGRGKAGGVELHDTKEGVKEFAQKWLGKNLVTFQTDANGQPVSKILVEEASNIANELYLGAVVDRASQRIVFMASTEGGVDIEKIAEETPELIHKAAIDPLVGPQAYQGRELAFKLGLEGDQIKQFVKIFMGLGNMFAQYDLALLEINPLVVTAEGSLLCLDGKINIDSNAMYRQPKLREMHDPSQEDEREAHAAQWELNYVALDGSIGCMVNGAGLAMGTMDIVNLHGGQPANFLDVGGGATKERVTEAFKIILSDSNVKAVLVNIFGGIVRCDLIADGIIGAVEEVGVEVPVVVRLEGNNAPLGSQKLAESGLNIIAATSLTEAAEKVVAAAEGK</sequence>